<dbReference type="EMBL" id="CR378669">
    <property type="protein sequence ID" value="CAG20427.1"/>
    <property type="molecule type" value="Genomic_DNA"/>
</dbReference>
<dbReference type="RefSeq" id="WP_011218725.1">
    <property type="nucleotide sequence ID" value="NC_006370.1"/>
</dbReference>
<dbReference type="SMR" id="Q6LQJ9"/>
<dbReference type="STRING" id="298386.PBPRA2024"/>
<dbReference type="KEGG" id="ppr:PBPRA2024"/>
<dbReference type="eggNOG" id="COG1666">
    <property type="taxonomic scope" value="Bacteria"/>
</dbReference>
<dbReference type="HOGENOM" id="CLU_099839_1_0_6"/>
<dbReference type="Proteomes" id="UP000000593">
    <property type="component" value="Chromosome 1"/>
</dbReference>
<dbReference type="GO" id="GO:0005829">
    <property type="term" value="C:cytosol"/>
    <property type="evidence" value="ECO:0007669"/>
    <property type="project" value="TreeGrafter"/>
</dbReference>
<dbReference type="GO" id="GO:0000166">
    <property type="term" value="F:nucleotide binding"/>
    <property type="evidence" value="ECO:0007669"/>
    <property type="project" value="TreeGrafter"/>
</dbReference>
<dbReference type="CDD" id="cd11740">
    <property type="entry name" value="YajQ_like"/>
    <property type="match status" value="1"/>
</dbReference>
<dbReference type="FunFam" id="3.30.70.860:FF:000001">
    <property type="entry name" value="UPF0234 protein YajQ"/>
    <property type="match status" value="1"/>
</dbReference>
<dbReference type="Gene3D" id="3.30.70.860">
    <property type="match status" value="1"/>
</dbReference>
<dbReference type="Gene3D" id="3.30.70.990">
    <property type="entry name" value="YajQ-like, domain 2"/>
    <property type="match status" value="1"/>
</dbReference>
<dbReference type="HAMAP" id="MF_00632">
    <property type="entry name" value="YajQ"/>
    <property type="match status" value="1"/>
</dbReference>
<dbReference type="InterPro" id="IPR007551">
    <property type="entry name" value="DUF520"/>
</dbReference>
<dbReference type="InterPro" id="IPR035571">
    <property type="entry name" value="UPF0234-like_C"/>
</dbReference>
<dbReference type="InterPro" id="IPR035570">
    <property type="entry name" value="UPF0234_N"/>
</dbReference>
<dbReference type="InterPro" id="IPR036183">
    <property type="entry name" value="YajQ-like_sf"/>
</dbReference>
<dbReference type="NCBIfam" id="NF003819">
    <property type="entry name" value="PRK05412.1"/>
    <property type="match status" value="1"/>
</dbReference>
<dbReference type="PANTHER" id="PTHR30476">
    <property type="entry name" value="UPF0234 PROTEIN YAJQ"/>
    <property type="match status" value="1"/>
</dbReference>
<dbReference type="PANTHER" id="PTHR30476:SF0">
    <property type="entry name" value="UPF0234 PROTEIN YAJQ"/>
    <property type="match status" value="1"/>
</dbReference>
<dbReference type="Pfam" id="PF04461">
    <property type="entry name" value="DUF520"/>
    <property type="match status" value="1"/>
</dbReference>
<dbReference type="SUPFAM" id="SSF89963">
    <property type="entry name" value="YajQ-like"/>
    <property type="match status" value="2"/>
</dbReference>
<sequence>MPSFDIVSEVDFVEVRNAVDNSARELKTRFDFKNVEASITFDKEIVKITTESDFQLTQLVSILRGNLAKREVDAQSMTQKDTVRTGKAWACNVEFKQGIESDTAKKVVKTIKDAKLKVQASIQGEKVRVTAKKRDDLQAAMALVRNNEELGQPFQFDNFRD</sequence>
<evidence type="ECO:0000255" key="1">
    <source>
        <dbReference type="HAMAP-Rule" id="MF_00632"/>
    </source>
</evidence>
<proteinExistence type="inferred from homology"/>
<gene>
    <name type="ordered locus">PBPRA2024</name>
</gene>
<keyword id="KW-0547">Nucleotide-binding</keyword>
<keyword id="KW-1185">Reference proteome</keyword>
<reference key="1">
    <citation type="journal article" date="2005" name="Science">
        <title>Life at depth: Photobacterium profundum genome sequence and expression analysis.</title>
        <authorList>
            <person name="Vezzi A."/>
            <person name="Campanaro S."/>
            <person name="D'Angelo M."/>
            <person name="Simonato F."/>
            <person name="Vitulo N."/>
            <person name="Lauro F.M."/>
            <person name="Cestaro A."/>
            <person name="Malacrida G."/>
            <person name="Simionati B."/>
            <person name="Cannata N."/>
            <person name="Romualdi C."/>
            <person name="Bartlett D.H."/>
            <person name="Valle G."/>
        </authorList>
    </citation>
    <scope>NUCLEOTIDE SEQUENCE [LARGE SCALE GENOMIC DNA]</scope>
    <source>
        <strain>ATCC BAA-1253 / SS9</strain>
    </source>
</reference>
<protein>
    <recommendedName>
        <fullName evidence="1">Nucleotide-binding protein PBPRA2024</fullName>
    </recommendedName>
</protein>
<comment type="function">
    <text evidence="1">Nucleotide-binding protein.</text>
</comment>
<comment type="similarity">
    <text evidence="1">Belongs to the YajQ family.</text>
</comment>
<name>Y2024_PHOPR</name>
<accession>Q6LQJ9</accession>
<feature type="chain" id="PRO_0000261957" description="Nucleotide-binding protein PBPRA2024">
    <location>
        <begin position="1"/>
        <end position="161"/>
    </location>
</feature>
<organism>
    <name type="scientific">Photobacterium profundum (strain SS9)</name>
    <dbReference type="NCBI Taxonomy" id="298386"/>
    <lineage>
        <taxon>Bacteria</taxon>
        <taxon>Pseudomonadati</taxon>
        <taxon>Pseudomonadota</taxon>
        <taxon>Gammaproteobacteria</taxon>
        <taxon>Vibrionales</taxon>
        <taxon>Vibrionaceae</taxon>
        <taxon>Photobacterium</taxon>
    </lineage>
</organism>